<gene>
    <name evidence="1" type="primary">glpK</name>
    <name type="ordered locus">DvMF_0809</name>
</gene>
<dbReference type="EC" id="2.7.1.30" evidence="1"/>
<dbReference type="EMBL" id="CP001197">
    <property type="protein sequence ID" value="ACL07765.1"/>
    <property type="molecule type" value="Genomic_DNA"/>
</dbReference>
<dbReference type="SMR" id="B8DL62"/>
<dbReference type="STRING" id="883.DvMF_0809"/>
<dbReference type="KEGG" id="dvm:DvMF_0809"/>
<dbReference type="eggNOG" id="COG0554">
    <property type="taxonomic scope" value="Bacteria"/>
</dbReference>
<dbReference type="HOGENOM" id="CLU_009281_2_3_7"/>
<dbReference type="OrthoDB" id="9805576at2"/>
<dbReference type="UniPathway" id="UPA00618">
    <property type="reaction ID" value="UER00672"/>
</dbReference>
<dbReference type="GO" id="GO:0005829">
    <property type="term" value="C:cytosol"/>
    <property type="evidence" value="ECO:0007669"/>
    <property type="project" value="TreeGrafter"/>
</dbReference>
<dbReference type="GO" id="GO:0005524">
    <property type="term" value="F:ATP binding"/>
    <property type="evidence" value="ECO:0007669"/>
    <property type="project" value="UniProtKB-UniRule"/>
</dbReference>
<dbReference type="GO" id="GO:0004370">
    <property type="term" value="F:glycerol kinase activity"/>
    <property type="evidence" value="ECO:0000250"/>
    <property type="project" value="UniProtKB"/>
</dbReference>
<dbReference type="GO" id="GO:0019563">
    <property type="term" value="P:glycerol catabolic process"/>
    <property type="evidence" value="ECO:0007669"/>
    <property type="project" value="UniProtKB-UniRule"/>
</dbReference>
<dbReference type="GO" id="GO:0006071">
    <property type="term" value="P:glycerol metabolic process"/>
    <property type="evidence" value="ECO:0000250"/>
    <property type="project" value="UniProtKB"/>
</dbReference>
<dbReference type="GO" id="GO:0006072">
    <property type="term" value="P:glycerol-3-phosphate metabolic process"/>
    <property type="evidence" value="ECO:0007669"/>
    <property type="project" value="InterPro"/>
</dbReference>
<dbReference type="CDD" id="cd07786">
    <property type="entry name" value="FGGY_EcGK_like"/>
    <property type="match status" value="1"/>
</dbReference>
<dbReference type="FunFam" id="3.30.420.40:FF:000007">
    <property type="entry name" value="Glycerol kinase"/>
    <property type="match status" value="1"/>
</dbReference>
<dbReference type="FunFam" id="3.30.420.40:FF:000008">
    <property type="entry name" value="Glycerol kinase"/>
    <property type="match status" value="1"/>
</dbReference>
<dbReference type="Gene3D" id="3.30.420.40">
    <property type="match status" value="2"/>
</dbReference>
<dbReference type="HAMAP" id="MF_00186">
    <property type="entry name" value="Glycerol_kin"/>
    <property type="match status" value="1"/>
</dbReference>
<dbReference type="InterPro" id="IPR043129">
    <property type="entry name" value="ATPase_NBD"/>
</dbReference>
<dbReference type="InterPro" id="IPR000577">
    <property type="entry name" value="Carb_kinase_FGGY"/>
</dbReference>
<dbReference type="InterPro" id="IPR018483">
    <property type="entry name" value="Carb_kinase_FGGY_CS"/>
</dbReference>
<dbReference type="InterPro" id="IPR018485">
    <property type="entry name" value="FGGY_C"/>
</dbReference>
<dbReference type="InterPro" id="IPR018484">
    <property type="entry name" value="FGGY_N"/>
</dbReference>
<dbReference type="InterPro" id="IPR005999">
    <property type="entry name" value="Glycerol_kin"/>
</dbReference>
<dbReference type="NCBIfam" id="TIGR01311">
    <property type="entry name" value="glycerol_kin"/>
    <property type="match status" value="1"/>
</dbReference>
<dbReference type="NCBIfam" id="NF000756">
    <property type="entry name" value="PRK00047.1"/>
    <property type="match status" value="1"/>
</dbReference>
<dbReference type="PANTHER" id="PTHR10196:SF69">
    <property type="entry name" value="GLYCEROL KINASE"/>
    <property type="match status" value="1"/>
</dbReference>
<dbReference type="PANTHER" id="PTHR10196">
    <property type="entry name" value="SUGAR KINASE"/>
    <property type="match status" value="1"/>
</dbReference>
<dbReference type="Pfam" id="PF02782">
    <property type="entry name" value="FGGY_C"/>
    <property type="match status" value="1"/>
</dbReference>
<dbReference type="Pfam" id="PF00370">
    <property type="entry name" value="FGGY_N"/>
    <property type="match status" value="1"/>
</dbReference>
<dbReference type="PIRSF" id="PIRSF000538">
    <property type="entry name" value="GlpK"/>
    <property type="match status" value="1"/>
</dbReference>
<dbReference type="SUPFAM" id="SSF53067">
    <property type="entry name" value="Actin-like ATPase domain"/>
    <property type="match status" value="2"/>
</dbReference>
<dbReference type="PROSITE" id="PS00933">
    <property type="entry name" value="FGGY_KINASES_1"/>
    <property type="match status" value="1"/>
</dbReference>
<dbReference type="PROSITE" id="PS00445">
    <property type="entry name" value="FGGY_KINASES_2"/>
    <property type="match status" value="1"/>
</dbReference>
<proteinExistence type="inferred from homology"/>
<sequence>MTKYVLALDQGTTSSRAILFSREGDIIQISQKEFTQIYPQPGWVEHNANEIFDTESWGMRDCLKQAGIDGSQVVAAGITNQRETTVVWDKASGAPVYNAIVWQDRRTAGFCDELKARGLADTFRQKTGLVLDAYFSGTKVRWILENVPGARAKAEKGELLFGTIDTWLIWNLTKGKVHATDESNASRTLLFNINTGQWDDELLGILGVPRSMLPTVTRSSEVVGEIHPEFLGKAIPIAGNAGDQQAATYGNACLKPGMAKNTYGTGCFMLMNTGKEVHASKNNLLTTMAWATPSGRYFALEGSVFIAGAVVQWLRDGLGIIKDAPEVEQLALSVPDNGGVYLVPAFAGLGAPHWDQYARGTMVGITRGSTKAHIARAALESIALQTLDIMDCMQKDAGIKLAALRADGGATRNNLLMQFQADVLGVPVERPKVTETTALGAAYLAGLAVGFWKSEEEIEAMWQLDRRFEPNMSAETREKLVYDWQRAVERAKAWAQE</sequence>
<feature type="chain" id="PRO_1000118548" description="Glycerol kinase">
    <location>
        <begin position="1"/>
        <end position="497"/>
    </location>
</feature>
<feature type="binding site" evidence="1">
    <location>
        <position position="12"/>
    </location>
    <ligand>
        <name>ADP</name>
        <dbReference type="ChEBI" id="CHEBI:456216"/>
    </ligand>
</feature>
<feature type="binding site" evidence="1">
    <location>
        <position position="12"/>
    </location>
    <ligand>
        <name>ATP</name>
        <dbReference type="ChEBI" id="CHEBI:30616"/>
    </ligand>
</feature>
<feature type="binding site" evidence="1">
    <location>
        <position position="12"/>
    </location>
    <ligand>
        <name>sn-glycerol 3-phosphate</name>
        <dbReference type="ChEBI" id="CHEBI:57597"/>
    </ligand>
</feature>
<feature type="binding site" evidence="1">
    <location>
        <position position="13"/>
    </location>
    <ligand>
        <name>ATP</name>
        <dbReference type="ChEBI" id="CHEBI:30616"/>
    </ligand>
</feature>
<feature type="binding site" evidence="1">
    <location>
        <position position="14"/>
    </location>
    <ligand>
        <name>ATP</name>
        <dbReference type="ChEBI" id="CHEBI:30616"/>
    </ligand>
</feature>
<feature type="binding site" evidence="1">
    <location>
        <position position="16"/>
    </location>
    <ligand>
        <name>ADP</name>
        <dbReference type="ChEBI" id="CHEBI:456216"/>
    </ligand>
</feature>
<feature type="binding site" evidence="1">
    <location>
        <position position="82"/>
    </location>
    <ligand>
        <name>glycerol</name>
        <dbReference type="ChEBI" id="CHEBI:17754"/>
    </ligand>
</feature>
<feature type="binding site" evidence="1">
    <location>
        <position position="82"/>
    </location>
    <ligand>
        <name>sn-glycerol 3-phosphate</name>
        <dbReference type="ChEBI" id="CHEBI:57597"/>
    </ligand>
</feature>
<feature type="binding site" evidence="1">
    <location>
        <position position="83"/>
    </location>
    <ligand>
        <name>glycerol</name>
        <dbReference type="ChEBI" id="CHEBI:17754"/>
    </ligand>
</feature>
<feature type="binding site" evidence="1">
    <location>
        <position position="83"/>
    </location>
    <ligand>
        <name>sn-glycerol 3-phosphate</name>
        <dbReference type="ChEBI" id="CHEBI:57597"/>
    </ligand>
</feature>
<feature type="binding site" evidence="1">
    <location>
        <position position="134"/>
    </location>
    <ligand>
        <name>glycerol</name>
        <dbReference type="ChEBI" id="CHEBI:17754"/>
    </ligand>
</feature>
<feature type="binding site" evidence="1">
    <location>
        <position position="134"/>
    </location>
    <ligand>
        <name>sn-glycerol 3-phosphate</name>
        <dbReference type="ChEBI" id="CHEBI:57597"/>
    </ligand>
</feature>
<feature type="binding site" evidence="1">
    <location>
        <position position="243"/>
    </location>
    <ligand>
        <name>glycerol</name>
        <dbReference type="ChEBI" id="CHEBI:17754"/>
    </ligand>
</feature>
<feature type="binding site" evidence="1">
    <location>
        <position position="243"/>
    </location>
    <ligand>
        <name>sn-glycerol 3-phosphate</name>
        <dbReference type="ChEBI" id="CHEBI:57597"/>
    </ligand>
</feature>
<feature type="binding site" evidence="1">
    <location>
        <position position="244"/>
    </location>
    <ligand>
        <name>glycerol</name>
        <dbReference type="ChEBI" id="CHEBI:17754"/>
    </ligand>
</feature>
<feature type="binding site" evidence="1">
    <location>
        <position position="265"/>
    </location>
    <ligand>
        <name>ADP</name>
        <dbReference type="ChEBI" id="CHEBI:456216"/>
    </ligand>
</feature>
<feature type="binding site" evidence="1">
    <location>
        <position position="265"/>
    </location>
    <ligand>
        <name>ATP</name>
        <dbReference type="ChEBI" id="CHEBI:30616"/>
    </ligand>
</feature>
<feature type="binding site" evidence="1">
    <location>
        <position position="308"/>
    </location>
    <ligand>
        <name>ADP</name>
        <dbReference type="ChEBI" id="CHEBI:456216"/>
    </ligand>
</feature>
<feature type="binding site" evidence="1">
    <location>
        <position position="308"/>
    </location>
    <ligand>
        <name>ATP</name>
        <dbReference type="ChEBI" id="CHEBI:30616"/>
    </ligand>
</feature>
<feature type="binding site" evidence="1">
    <location>
        <position position="312"/>
    </location>
    <ligand>
        <name>ATP</name>
        <dbReference type="ChEBI" id="CHEBI:30616"/>
    </ligand>
</feature>
<feature type="binding site" evidence="1">
    <location>
        <position position="409"/>
    </location>
    <ligand>
        <name>ADP</name>
        <dbReference type="ChEBI" id="CHEBI:456216"/>
    </ligand>
</feature>
<feature type="binding site" evidence="1">
    <location>
        <position position="409"/>
    </location>
    <ligand>
        <name>ATP</name>
        <dbReference type="ChEBI" id="CHEBI:30616"/>
    </ligand>
</feature>
<feature type="binding site" evidence="1">
    <location>
        <position position="413"/>
    </location>
    <ligand>
        <name>ADP</name>
        <dbReference type="ChEBI" id="CHEBI:456216"/>
    </ligand>
</feature>
<protein>
    <recommendedName>
        <fullName evidence="1">Glycerol kinase</fullName>
        <ecNumber evidence="1">2.7.1.30</ecNumber>
    </recommendedName>
    <alternativeName>
        <fullName evidence="1">ATP:glycerol 3-phosphotransferase</fullName>
    </alternativeName>
    <alternativeName>
        <fullName evidence="1">Glycerokinase</fullName>
        <shortName evidence="1">GK</shortName>
    </alternativeName>
</protein>
<accession>B8DL62</accession>
<reference key="1">
    <citation type="submission" date="2008-10" db="EMBL/GenBank/DDBJ databases">
        <title>Complete sequence of Desulfovibrio vulgaris str. 'Miyazaki F'.</title>
        <authorList>
            <person name="Lucas S."/>
            <person name="Copeland A."/>
            <person name="Lapidus A."/>
            <person name="Glavina del Rio T."/>
            <person name="Dalin E."/>
            <person name="Tice H."/>
            <person name="Bruce D."/>
            <person name="Goodwin L."/>
            <person name="Pitluck S."/>
            <person name="Sims D."/>
            <person name="Brettin T."/>
            <person name="Detter J.C."/>
            <person name="Han C."/>
            <person name="Larimer F."/>
            <person name="Land M."/>
            <person name="Hauser L."/>
            <person name="Kyrpides N."/>
            <person name="Mikhailova N."/>
            <person name="Hazen T.C."/>
            <person name="Richardson P."/>
        </authorList>
    </citation>
    <scope>NUCLEOTIDE SEQUENCE [LARGE SCALE GENOMIC DNA]</scope>
    <source>
        <strain>DSM 19637 / Miyazaki F</strain>
    </source>
</reference>
<comment type="function">
    <text evidence="1">Key enzyme in the regulation of glycerol uptake and metabolism. Catalyzes the phosphorylation of glycerol to yield sn-glycerol 3-phosphate.</text>
</comment>
<comment type="catalytic activity">
    <reaction evidence="1">
        <text>glycerol + ATP = sn-glycerol 3-phosphate + ADP + H(+)</text>
        <dbReference type="Rhea" id="RHEA:21644"/>
        <dbReference type="ChEBI" id="CHEBI:15378"/>
        <dbReference type="ChEBI" id="CHEBI:17754"/>
        <dbReference type="ChEBI" id="CHEBI:30616"/>
        <dbReference type="ChEBI" id="CHEBI:57597"/>
        <dbReference type="ChEBI" id="CHEBI:456216"/>
        <dbReference type="EC" id="2.7.1.30"/>
    </reaction>
</comment>
<comment type="activity regulation">
    <text evidence="1">Inhibited by fructose 1,6-bisphosphate (FBP).</text>
</comment>
<comment type="pathway">
    <text evidence="1">Polyol metabolism; glycerol degradation via glycerol kinase pathway; sn-glycerol 3-phosphate from glycerol: step 1/1.</text>
</comment>
<comment type="similarity">
    <text evidence="1">Belongs to the FGGY kinase family.</text>
</comment>
<keyword id="KW-0067">ATP-binding</keyword>
<keyword id="KW-0319">Glycerol metabolism</keyword>
<keyword id="KW-0418">Kinase</keyword>
<keyword id="KW-0547">Nucleotide-binding</keyword>
<keyword id="KW-0808">Transferase</keyword>
<organism>
    <name type="scientific">Nitratidesulfovibrio vulgaris (strain DSM 19637 / Miyazaki F)</name>
    <name type="common">Desulfovibrio vulgaris</name>
    <dbReference type="NCBI Taxonomy" id="883"/>
    <lineage>
        <taxon>Bacteria</taxon>
        <taxon>Pseudomonadati</taxon>
        <taxon>Thermodesulfobacteriota</taxon>
        <taxon>Desulfovibrionia</taxon>
        <taxon>Desulfovibrionales</taxon>
        <taxon>Desulfovibrionaceae</taxon>
        <taxon>Nitratidesulfovibrio</taxon>
    </lineage>
</organism>
<evidence type="ECO:0000255" key="1">
    <source>
        <dbReference type="HAMAP-Rule" id="MF_00186"/>
    </source>
</evidence>
<name>GLPK_NITV9</name>